<reference key="1">
    <citation type="submission" date="2004-01" db="EMBL/GenBank/DDBJ databases">
        <title>Sequencing of the complete genomes of BPV 3, BPV 5 and BPV 6.</title>
        <authorList>
            <person name="Delius H."/>
            <person name="de Villiers E.M."/>
        </authorList>
    </citation>
    <scope>NUCLEOTIDE SEQUENCE [GENOMIC DNA]</scope>
</reference>
<organism>
    <name type="scientific">Bos taurus papillomavirus 6</name>
    <name type="common">Bovine papillomavirus 6</name>
    <dbReference type="NCBI Taxonomy" id="10563"/>
    <lineage>
        <taxon>Viruses</taxon>
        <taxon>Monodnaviria</taxon>
        <taxon>Shotokuvirae</taxon>
        <taxon>Cossaviricota</taxon>
        <taxon>Papovaviricetes</taxon>
        <taxon>Zurhausenvirales</taxon>
        <taxon>Papillomaviridae</taxon>
        <taxon>Firstpapillomavirinae</taxon>
        <taxon>Xipapillomavirus</taxon>
        <taxon>Xipapillomavirus 1</taxon>
    </lineage>
</organism>
<proteinExistence type="inferred from homology"/>
<comment type="function">
    <text evidence="1">Plays a role in viral genome replication by driving entry of quiescent cells into the cell cycle. Stimulation of progression from G1 to S phase allows the virus to efficiently use the cellular DNA replicating machinery to achieve viral genome replication. E7 protein has both transforming and trans-activating activities. Induces the disassembly of the E2F1 transcription factor from RB1, with subsequent transcriptional activation of E2F1-regulated S-phase genes. Interferes with host histone deacetylation mediated by HDAC1 and HDAC2, leading to transcription activation. Also plays a role in the inhibition of both antiviral and antiproliferative functions of host interferon alpha. Interaction with host TMEM173/STING impairs the ability of TMEM173/STING to sense cytosolic DNA and promote the production of type I interferon (IFN-alpha and IFN-beta).</text>
</comment>
<comment type="subunit">
    <text evidence="1">Homodimer. Homooligomer. Interacts with host RB1; this interaction induces dissociation of RB1-E2F1 complex thereby disrupting RB1 activity. Interacts with host EP300; this interaction represses EP300 transcriptional activity. Interacts with protein E2; this interaction inhibits E7 oncogenic activity. Interacts with host TMEM173/STING; this interaction impairs the ability of TMEM173/STING to sense cytosolic DNA and promote the production of type I interferon (IFN-alpha and IFN-beta).</text>
</comment>
<comment type="subcellular location">
    <subcellularLocation>
        <location evidence="1">Host cytoplasm</location>
    </subcellularLocation>
    <subcellularLocation>
        <location evidence="1">Host nucleus</location>
    </subcellularLocation>
    <text evidence="1">Predominantly found in the host nucleus.</text>
</comment>
<comment type="domain">
    <text evidence="1">The E7 terminal domain is an intrinsically disordered domain, whose flexibility and conformational transitions confer target adaptability to the oncoprotein. It allows adaptation to a variety of protein targets and exposes the PEST degradation sequence that regulates its turnover in the cell.</text>
</comment>
<comment type="PTM">
    <text evidence="1">Highly phosphorylated.</text>
</comment>
<comment type="similarity">
    <text evidence="1">Belongs to the papillomaviridae E7 protein family.</text>
</comment>
<name>VE7_BPV6</name>
<keyword id="KW-0010">Activator</keyword>
<keyword id="KW-0238">DNA-binding</keyword>
<keyword id="KW-0244">Early protein</keyword>
<keyword id="KW-1078">G1/S host cell cycle checkpoint dysregulation by virus</keyword>
<keyword id="KW-1035">Host cytoplasm</keyword>
<keyword id="KW-1048">Host nucleus</keyword>
<keyword id="KW-0945">Host-virus interaction</keyword>
<keyword id="KW-1090">Inhibition of host innate immune response by virus</keyword>
<keyword id="KW-1114">Inhibition of host interferon signaling pathway by virus</keyword>
<keyword id="KW-0922">Interferon antiviral system evasion</keyword>
<keyword id="KW-0479">Metal-binding</keyword>
<keyword id="KW-1121">Modulation of host cell cycle by virus</keyword>
<keyword id="KW-0553">Oncogene</keyword>
<keyword id="KW-0804">Transcription</keyword>
<keyword id="KW-0805">Transcription regulation</keyword>
<keyword id="KW-0899">Viral immunoevasion</keyword>
<keyword id="KW-0862">Zinc</keyword>
<keyword id="KW-0863">Zinc-finger</keyword>
<sequence length="99" mass="10895">MKGQSMILKDLAAELEEVVSPINLDCEEEIETEEVDCPAPFAVEAVCHVCEQVLRLAVVASPDGILQLQQLLLTDSLSFLCTSCSREAFCNRRPQRNGS</sequence>
<dbReference type="EMBL" id="AJ620208">
    <property type="protein sequence ID" value="CAF05686.1"/>
    <property type="molecule type" value="Genomic_DNA"/>
</dbReference>
<dbReference type="SMR" id="Q705F5"/>
<dbReference type="Proteomes" id="UP000117755">
    <property type="component" value="Genome"/>
</dbReference>
<dbReference type="GO" id="GO:0030430">
    <property type="term" value="C:host cell cytoplasm"/>
    <property type="evidence" value="ECO:0007669"/>
    <property type="project" value="UniProtKB-SubCell"/>
</dbReference>
<dbReference type="GO" id="GO:0042025">
    <property type="term" value="C:host cell nucleus"/>
    <property type="evidence" value="ECO:0007669"/>
    <property type="project" value="UniProtKB-SubCell"/>
</dbReference>
<dbReference type="GO" id="GO:0003677">
    <property type="term" value="F:DNA binding"/>
    <property type="evidence" value="ECO:0007669"/>
    <property type="project" value="UniProtKB-UniRule"/>
</dbReference>
<dbReference type="GO" id="GO:0003700">
    <property type="term" value="F:DNA-binding transcription factor activity"/>
    <property type="evidence" value="ECO:0007669"/>
    <property type="project" value="UniProtKB-UniRule"/>
</dbReference>
<dbReference type="GO" id="GO:0019904">
    <property type="term" value="F:protein domain specific binding"/>
    <property type="evidence" value="ECO:0007669"/>
    <property type="project" value="UniProtKB-UniRule"/>
</dbReference>
<dbReference type="GO" id="GO:0008270">
    <property type="term" value="F:zinc ion binding"/>
    <property type="evidence" value="ECO:0007669"/>
    <property type="project" value="UniProtKB-KW"/>
</dbReference>
<dbReference type="GO" id="GO:0006351">
    <property type="term" value="P:DNA-templated transcription"/>
    <property type="evidence" value="ECO:0007669"/>
    <property type="project" value="UniProtKB-UniRule"/>
</dbReference>
<dbReference type="GO" id="GO:0039645">
    <property type="term" value="P:symbiont-mediated perturbation of host cell cycle G1/S transition checkpoint"/>
    <property type="evidence" value="ECO:0007669"/>
    <property type="project" value="UniProtKB-UniRule"/>
</dbReference>
<dbReference type="GO" id="GO:0052170">
    <property type="term" value="P:symbiont-mediated suppression of host innate immune response"/>
    <property type="evidence" value="ECO:0007669"/>
    <property type="project" value="UniProtKB-KW"/>
</dbReference>
<dbReference type="GO" id="GO:0039502">
    <property type="term" value="P:symbiont-mediated suppression of host type I interferon-mediated signaling pathway"/>
    <property type="evidence" value="ECO:0007669"/>
    <property type="project" value="UniProtKB-UniRule"/>
</dbReference>
<dbReference type="Gene3D" id="3.30.160.330">
    <property type="match status" value="1"/>
</dbReference>
<dbReference type="HAMAP" id="MF_04004">
    <property type="entry name" value="PPV_E7"/>
    <property type="match status" value="1"/>
</dbReference>
<dbReference type="InterPro" id="IPR000148">
    <property type="entry name" value="Papilloma_E7"/>
</dbReference>
<dbReference type="Pfam" id="PF00527">
    <property type="entry name" value="E7"/>
    <property type="match status" value="1"/>
</dbReference>
<dbReference type="PIRSF" id="PIRSF003407">
    <property type="entry name" value="Papvi_E7"/>
    <property type="match status" value="1"/>
</dbReference>
<dbReference type="SUPFAM" id="SSF161234">
    <property type="entry name" value="E7 C-terminal domain-like"/>
    <property type="match status" value="1"/>
</dbReference>
<organismHost>
    <name type="scientific">Bos taurus</name>
    <name type="common">Bovine</name>
    <dbReference type="NCBI Taxonomy" id="9913"/>
</organismHost>
<evidence type="ECO:0000255" key="1">
    <source>
        <dbReference type="HAMAP-Rule" id="MF_04004"/>
    </source>
</evidence>
<feature type="chain" id="PRO_0000133397" description="Protein E7">
    <location>
        <begin position="1"/>
        <end position="99"/>
    </location>
</feature>
<feature type="zinc finger region" evidence="1">
    <location>
        <begin position="47"/>
        <end position="84"/>
    </location>
</feature>
<feature type="region of interest" description="E7 terminal domain" evidence="1">
    <location>
        <begin position="1"/>
        <end position="37"/>
    </location>
</feature>
<feature type="short sequence motif" description="LXCXE motif; interaction with host RB1 and TMEM173/STING" evidence="1">
    <location>
        <begin position="24"/>
        <end position="28"/>
    </location>
</feature>
<feature type="short sequence motif" description="Nuclear export signal" evidence="1">
    <location>
        <begin position="65"/>
        <end position="73"/>
    </location>
</feature>
<protein>
    <recommendedName>
        <fullName evidence="1">Protein E7</fullName>
    </recommendedName>
</protein>
<accession>Q705F5</accession>
<gene>
    <name evidence="1" type="primary">E7</name>
</gene>